<keyword id="KW-0963">Cytoplasm</keyword>
<keyword id="KW-0479">Metal-binding</keyword>
<keyword id="KW-0520">NAD</keyword>
<keyword id="KW-0560">Oxidoreductase</keyword>
<keyword id="KW-1185">Reference proteome</keyword>
<keyword id="KW-0862">Zinc</keyword>
<name>ADH1_PICST</name>
<feature type="chain" id="PRO_0000160727" description="Alcohol dehydrogenase 1">
    <location>
        <begin position="1"/>
        <end position="348"/>
    </location>
</feature>
<feature type="binding site" evidence="1">
    <location>
        <position position="44"/>
    </location>
    <ligand>
        <name>Zn(2+)</name>
        <dbReference type="ChEBI" id="CHEBI:29105"/>
        <label>1</label>
        <note>catalytic</note>
    </ligand>
</feature>
<feature type="binding site" evidence="1">
    <location>
        <position position="67"/>
    </location>
    <ligand>
        <name>Zn(2+)</name>
        <dbReference type="ChEBI" id="CHEBI:29105"/>
        <label>1</label>
        <note>catalytic</note>
    </ligand>
</feature>
<feature type="binding site" evidence="1">
    <location>
        <position position="98"/>
    </location>
    <ligand>
        <name>Zn(2+)</name>
        <dbReference type="ChEBI" id="CHEBI:29105"/>
        <label>2</label>
    </ligand>
</feature>
<feature type="binding site" evidence="1">
    <location>
        <position position="101"/>
    </location>
    <ligand>
        <name>Zn(2+)</name>
        <dbReference type="ChEBI" id="CHEBI:29105"/>
        <label>2</label>
    </ligand>
</feature>
<feature type="binding site" evidence="1">
    <location>
        <position position="104"/>
    </location>
    <ligand>
        <name>Zn(2+)</name>
        <dbReference type="ChEBI" id="CHEBI:29105"/>
        <label>2</label>
    </ligand>
</feature>
<feature type="binding site" evidence="1">
    <location>
        <position position="112"/>
    </location>
    <ligand>
        <name>Zn(2+)</name>
        <dbReference type="ChEBI" id="CHEBI:29105"/>
        <label>2</label>
    </ligand>
</feature>
<feature type="binding site" evidence="1">
    <location>
        <position position="154"/>
    </location>
    <ligand>
        <name>Zn(2+)</name>
        <dbReference type="ChEBI" id="CHEBI:29105"/>
        <label>1</label>
        <note>catalytic</note>
    </ligand>
</feature>
<feature type="binding site" evidence="1">
    <location>
        <begin position="178"/>
        <end position="184"/>
    </location>
    <ligand>
        <name>NAD(+)</name>
        <dbReference type="ChEBI" id="CHEBI:57540"/>
    </ligand>
</feature>
<feature type="binding site" evidence="1">
    <location>
        <position position="202"/>
    </location>
    <ligand>
        <name>NAD(+)</name>
        <dbReference type="ChEBI" id="CHEBI:57540"/>
    </ligand>
</feature>
<feature type="binding site" evidence="1">
    <location>
        <position position="207"/>
    </location>
    <ligand>
        <name>NAD(+)</name>
        <dbReference type="ChEBI" id="CHEBI:57540"/>
    </ligand>
</feature>
<feature type="binding site" evidence="1">
    <location>
        <begin position="269"/>
        <end position="271"/>
    </location>
    <ligand>
        <name>NAD(+)</name>
        <dbReference type="ChEBI" id="CHEBI:57540"/>
    </ligand>
</feature>
<feature type="binding site" evidence="1">
    <location>
        <position position="341"/>
    </location>
    <ligand>
        <name>NAD(+)</name>
        <dbReference type="ChEBI" id="CHEBI:57540"/>
    </ligand>
</feature>
<comment type="function">
    <text>Converts ethanol to acetaldehyde and plays a major role in xylose fermentation.</text>
</comment>
<comment type="catalytic activity">
    <reaction>
        <text>a primary alcohol + NAD(+) = an aldehyde + NADH + H(+)</text>
        <dbReference type="Rhea" id="RHEA:10736"/>
        <dbReference type="ChEBI" id="CHEBI:15378"/>
        <dbReference type="ChEBI" id="CHEBI:15734"/>
        <dbReference type="ChEBI" id="CHEBI:17478"/>
        <dbReference type="ChEBI" id="CHEBI:57540"/>
        <dbReference type="ChEBI" id="CHEBI:57945"/>
        <dbReference type="EC" id="1.1.1.1"/>
    </reaction>
</comment>
<comment type="catalytic activity">
    <reaction>
        <text>a secondary alcohol + NAD(+) = a ketone + NADH + H(+)</text>
        <dbReference type="Rhea" id="RHEA:10740"/>
        <dbReference type="ChEBI" id="CHEBI:15378"/>
        <dbReference type="ChEBI" id="CHEBI:17087"/>
        <dbReference type="ChEBI" id="CHEBI:35681"/>
        <dbReference type="ChEBI" id="CHEBI:57540"/>
        <dbReference type="ChEBI" id="CHEBI:57945"/>
        <dbReference type="EC" id="1.1.1.1"/>
    </reaction>
</comment>
<comment type="cofactor">
    <cofactor evidence="1">
        <name>Zn(2+)</name>
        <dbReference type="ChEBI" id="CHEBI:29105"/>
    </cofactor>
    <text evidence="1">Binds 2 Zn(2+) ions per subunit.</text>
</comment>
<comment type="subunit">
    <text evidence="1">Homotetramer.</text>
</comment>
<comment type="subcellular location">
    <subcellularLocation>
        <location>Cytoplasm</location>
    </subcellularLocation>
</comment>
<comment type="similarity">
    <text evidence="2">Belongs to the zinc-containing alcohol dehydrogenase family.</text>
</comment>
<accession>O00097</accession>
<accession>A3LNN7</accession>
<sequence length="348" mass="36520">MSVPTTQKAVVFESNGGPLLYKDIPVPTPKPNEILINVKYSGVCHTDLHAWKGDWPLDTKLPLVGGHEGAGVVVGIGSNVTGWELGDYAGIKWLNGSCLNCEFCQHSDEPNCAKADLSGYTHDGSFQQYATADAVQAARLPKGTDLAQAAPILCAGITVYKALKTAQIQPGNWVCISGAGGGLGSLAIQYAKAMGFRVIAIDGGEEKGEFVKSLGAEAYVDFTVSKDIVKDIQTATDGGPHAAINVSVSEKAIAQSCQYVRSTGTVVLVGLPAGAKVVAPVFDAVVKSISIRGSYVGNRADSAEAIDFFTRGLIKCPIKVVGLSELPKVYELMEAGKVIGRYVVDTSK</sequence>
<proteinExistence type="inferred from homology"/>
<organism>
    <name type="scientific">Scheffersomyces stipitis (strain ATCC 58785 / CBS 6054 / NBRC 10063 / NRRL Y-11545)</name>
    <name type="common">Yeast</name>
    <name type="synonym">Pichia stipitis</name>
    <dbReference type="NCBI Taxonomy" id="322104"/>
    <lineage>
        <taxon>Eukaryota</taxon>
        <taxon>Fungi</taxon>
        <taxon>Dikarya</taxon>
        <taxon>Ascomycota</taxon>
        <taxon>Saccharomycotina</taxon>
        <taxon>Pichiomycetes</taxon>
        <taxon>Debaryomycetaceae</taxon>
        <taxon>Scheffersomyces</taxon>
    </lineage>
</organism>
<reference key="1">
    <citation type="journal article" date="1998" name="Appl. Environ. Microbiol.">
        <title>Pichia stipitis genes for alcohol dehydrogenase with fermentative and respiratory functions.</title>
        <authorList>
            <person name="Cho J.Y."/>
            <person name="Jeffries T.W."/>
        </authorList>
    </citation>
    <scope>NUCLEOTIDE SEQUENCE [GENOMIC DNA]</scope>
    <source>
        <strain>ATCC 58785 / CBS 6054 / NBRC 10063 / NRRL Y-11545</strain>
    </source>
</reference>
<reference key="2">
    <citation type="journal article" date="1998" name="Yeast">
        <title>Molecular cloning of alcohol dehydrogenase genes of the yeast Pichia stipitis and identification of the fermentative ADH.</title>
        <authorList>
            <person name="Passoth V."/>
            <person name="Schaefer B."/>
            <person name="Liebel B."/>
            <person name="Weierstall T."/>
            <person name="Klinner U."/>
        </authorList>
    </citation>
    <scope>NUCLEOTIDE SEQUENCE [GENOMIC DNA]</scope>
    <source>
        <strain>ATCC 62970 / CBS 5774 / NRRL Y-11542</strain>
    </source>
</reference>
<reference key="3">
    <citation type="journal article" date="2007" name="Nat. Biotechnol.">
        <title>Genome sequence of the lignocellulose-bioconverting and xylose-fermenting yeast Pichia stipitis.</title>
        <authorList>
            <person name="Jeffries T.W."/>
            <person name="Grigoriev I.V."/>
            <person name="Grimwood J."/>
            <person name="Laplaza J.M."/>
            <person name="Aerts A."/>
            <person name="Salamov A."/>
            <person name="Schmutz J."/>
            <person name="Lindquist E."/>
            <person name="Dehal P."/>
            <person name="Shapiro H."/>
            <person name="Jin Y.-S."/>
            <person name="Passoth V."/>
            <person name="Richardson P.M."/>
        </authorList>
    </citation>
    <scope>NUCLEOTIDE SEQUENCE [LARGE SCALE GENOMIC DNA]</scope>
    <source>
        <strain>ATCC 58785 / CBS 6054 / NBRC 10063 / NRRL Y-11545</strain>
    </source>
</reference>
<protein>
    <recommendedName>
        <fullName>Alcohol dehydrogenase 1</fullName>
        <ecNumber>1.1.1.1</ecNumber>
    </recommendedName>
    <alternativeName>
        <fullName>ADH 2</fullName>
    </alternativeName>
    <alternativeName>
        <fullName>Alcohol dehydrogenase I</fullName>
    </alternativeName>
</protein>
<dbReference type="EC" id="1.1.1.1"/>
<dbReference type="EMBL" id="AF008245">
    <property type="protein sequence ID" value="AAC49991.1"/>
    <property type="molecule type" value="Genomic_DNA"/>
</dbReference>
<dbReference type="EMBL" id="Y13397">
    <property type="protein sequence ID" value="CAA73827.1"/>
    <property type="molecule type" value="Genomic_DNA"/>
</dbReference>
<dbReference type="EMBL" id="CP000496">
    <property type="protein sequence ID" value="ABN64893.1"/>
    <property type="molecule type" value="Genomic_DNA"/>
</dbReference>
<dbReference type="RefSeq" id="XP_001382922.1">
    <property type="nucleotide sequence ID" value="XM_001382885.1"/>
</dbReference>
<dbReference type="SMR" id="O00097"/>
<dbReference type="FunCoup" id="O00097">
    <property type="interactions" value="1016"/>
</dbReference>
<dbReference type="STRING" id="322104.O00097"/>
<dbReference type="GeneID" id="4836752"/>
<dbReference type="KEGG" id="pic:PICST_68558"/>
<dbReference type="eggNOG" id="KOG0023">
    <property type="taxonomic scope" value="Eukaryota"/>
</dbReference>
<dbReference type="HOGENOM" id="CLU_026673_20_1_1"/>
<dbReference type="InParanoid" id="O00097"/>
<dbReference type="OMA" id="AFPHVKP"/>
<dbReference type="OrthoDB" id="1879366at2759"/>
<dbReference type="Proteomes" id="UP000002258">
    <property type="component" value="Chromosome 2"/>
</dbReference>
<dbReference type="GO" id="GO:0005737">
    <property type="term" value="C:cytoplasm"/>
    <property type="evidence" value="ECO:0007669"/>
    <property type="project" value="UniProtKB-SubCell"/>
</dbReference>
<dbReference type="GO" id="GO:0004022">
    <property type="term" value="F:alcohol dehydrogenase (NAD+) activity"/>
    <property type="evidence" value="ECO:0007669"/>
    <property type="project" value="UniProtKB-EC"/>
</dbReference>
<dbReference type="GO" id="GO:0008270">
    <property type="term" value="F:zinc ion binding"/>
    <property type="evidence" value="ECO:0007669"/>
    <property type="project" value="InterPro"/>
</dbReference>
<dbReference type="CDD" id="cd08297">
    <property type="entry name" value="CAD3"/>
    <property type="match status" value="1"/>
</dbReference>
<dbReference type="FunFam" id="3.40.50.720:FF:000039">
    <property type="entry name" value="Alcohol dehydrogenase AdhP"/>
    <property type="match status" value="1"/>
</dbReference>
<dbReference type="FunFam" id="3.90.180.10:FF:000002">
    <property type="entry name" value="Alcohol dehydrogenase AdhP"/>
    <property type="match status" value="1"/>
</dbReference>
<dbReference type="Gene3D" id="3.90.180.10">
    <property type="entry name" value="Medium-chain alcohol dehydrogenases, catalytic domain"/>
    <property type="match status" value="1"/>
</dbReference>
<dbReference type="Gene3D" id="3.40.50.720">
    <property type="entry name" value="NAD(P)-binding Rossmann-like Domain"/>
    <property type="match status" value="1"/>
</dbReference>
<dbReference type="InterPro" id="IPR013149">
    <property type="entry name" value="ADH-like_C"/>
</dbReference>
<dbReference type="InterPro" id="IPR013154">
    <property type="entry name" value="ADH-like_N"/>
</dbReference>
<dbReference type="InterPro" id="IPR002328">
    <property type="entry name" value="ADH_Zn_CS"/>
</dbReference>
<dbReference type="InterPro" id="IPR011032">
    <property type="entry name" value="GroES-like_sf"/>
</dbReference>
<dbReference type="InterPro" id="IPR036291">
    <property type="entry name" value="NAD(P)-bd_dom_sf"/>
</dbReference>
<dbReference type="InterPro" id="IPR020843">
    <property type="entry name" value="PKS_ER"/>
</dbReference>
<dbReference type="PANTHER" id="PTHR42940">
    <property type="entry name" value="ALCOHOL DEHYDROGENASE 1-RELATED"/>
    <property type="match status" value="1"/>
</dbReference>
<dbReference type="PANTHER" id="PTHR42940:SF3">
    <property type="entry name" value="ALCOHOL DEHYDROGENASE 1-RELATED"/>
    <property type="match status" value="1"/>
</dbReference>
<dbReference type="Pfam" id="PF08240">
    <property type="entry name" value="ADH_N"/>
    <property type="match status" value="1"/>
</dbReference>
<dbReference type="Pfam" id="PF00107">
    <property type="entry name" value="ADH_zinc_N"/>
    <property type="match status" value="1"/>
</dbReference>
<dbReference type="SMART" id="SM00829">
    <property type="entry name" value="PKS_ER"/>
    <property type="match status" value="1"/>
</dbReference>
<dbReference type="SUPFAM" id="SSF50129">
    <property type="entry name" value="GroES-like"/>
    <property type="match status" value="1"/>
</dbReference>
<dbReference type="SUPFAM" id="SSF51735">
    <property type="entry name" value="NAD(P)-binding Rossmann-fold domains"/>
    <property type="match status" value="1"/>
</dbReference>
<dbReference type="PROSITE" id="PS00059">
    <property type="entry name" value="ADH_ZINC"/>
    <property type="match status" value="1"/>
</dbReference>
<evidence type="ECO:0000250" key="1"/>
<evidence type="ECO:0000305" key="2"/>
<gene>
    <name type="primary">ADH1</name>
    <name type="synonym">ADH2</name>
    <name type="ORF">PICST_68558</name>
</gene>